<accession>P0C537</accession>
<accession>Q9RPX8</accession>
<proteinExistence type="inferred from homology"/>
<name>VIRB7_BRUME</name>
<reference key="1">
    <citation type="journal article" date="2002" name="Proc. Natl. Acad. Sci. U.S.A.">
        <title>The genome sequence of the facultative intracellular pathogen Brucella melitensis.</title>
        <authorList>
            <person name="DelVecchio V.G."/>
            <person name="Kapatral V."/>
            <person name="Redkar R.J."/>
            <person name="Patra G."/>
            <person name="Mujer C."/>
            <person name="Los T."/>
            <person name="Ivanova N."/>
            <person name="Anderson I."/>
            <person name="Bhattacharyya A."/>
            <person name="Lykidis A."/>
            <person name="Reznik G."/>
            <person name="Jablonski L."/>
            <person name="Larsen N."/>
            <person name="D'Souza M."/>
            <person name="Bernal A."/>
            <person name="Mazur M."/>
            <person name="Goltsman E."/>
            <person name="Selkov E."/>
            <person name="Elzer P.H."/>
            <person name="Hagius S."/>
            <person name="O'Callaghan D."/>
            <person name="Letesson J.-J."/>
            <person name="Haselkorn R."/>
            <person name="Kyrpides N.C."/>
            <person name="Overbeek R."/>
        </authorList>
    </citation>
    <scope>NUCLEOTIDE SEQUENCE [LARGE SCALE GENOMIC DNA]</scope>
    <source>
        <strain>ATCC 23456 / CCUG 17765 / NCTC 10094 / 16M</strain>
    </source>
</reference>
<gene>
    <name type="primary">virB7</name>
    <name type="ordered locus">BMEII0031</name>
</gene>
<organism>
    <name type="scientific">Brucella melitensis biotype 1 (strain ATCC 23456 / CCUG 17765 / NCTC 10094 / 16M)</name>
    <dbReference type="NCBI Taxonomy" id="224914"/>
    <lineage>
        <taxon>Bacteria</taxon>
        <taxon>Pseudomonadati</taxon>
        <taxon>Pseudomonadota</taxon>
        <taxon>Alphaproteobacteria</taxon>
        <taxon>Hyphomicrobiales</taxon>
        <taxon>Brucellaceae</taxon>
        <taxon>Brucella/Ochrobactrum group</taxon>
        <taxon>Brucella</taxon>
    </lineage>
</organism>
<feature type="signal peptide" evidence="1">
    <location>
        <begin position="1"/>
        <end position="16"/>
    </location>
</feature>
<feature type="chain" id="PRO_0000291442" description="Type IV secretion system putative lipoprotein virB7">
    <location>
        <begin position="17"/>
        <end position="57"/>
    </location>
</feature>
<feature type="region of interest" description="Disordered" evidence="2">
    <location>
        <begin position="35"/>
        <end position="57"/>
    </location>
</feature>
<feature type="lipid moiety-binding region" description="N-palmitoyl cysteine" evidence="1">
    <location>
        <position position="17"/>
    </location>
</feature>
<feature type="lipid moiety-binding region" description="S-diacylglycerol cysteine" evidence="1">
    <location>
        <position position="17"/>
    </location>
</feature>
<comment type="subcellular location">
    <subcellularLocation>
        <location evidence="1">Cell membrane</location>
        <topology evidence="1">Lipid-anchor</topology>
    </subcellularLocation>
</comment>
<evidence type="ECO:0000255" key="1">
    <source>
        <dbReference type="PROSITE-ProRule" id="PRU00303"/>
    </source>
</evidence>
<evidence type="ECO:0000256" key="2">
    <source>
        <dbReference type="SAM" id="MobiDB-lite"/>
    </source>
</evidence>
<keyword id="KW-1003">Cell membrane</keyword>
<keyword id="KW-0449">Lipoprotein</keyword>
<keyword id="KW-0472">Membrane</keyword>
<keyword id="KW-0564">Palmitate</keyword>
<keyword id="KW-0732">Signal</keyword>
<keyword id="KW-0843">Virulence</keyword>
<protein>
    <recommendedName>
        <fullName>Type IV secretion system putative lipoprotein virB7</fullName>
    </recommendedName>
</protein>
<dbReference type="EMBL" id="AE008918">
    <property type="protein sequence ID" value="AAL53272.1"/>
    <property type="molecule type" value="Genomic_DNA"/>
</dbReference>
<dbReference type="PIR" id="AE3513">
    <property type="entry name" value="AE3513"/>
</dbReference>
<dbReference type="RefSeq" id="WP_002966516.1">
    <property type="nucleotide sequence ID" value="NZ_GG703779.1"/>
</dbReference>
<dbReference type="KEGG" id="bme:BMEII0031"/>
<dbReference type="KEGG" id="bmel:DK63_2088"/>
<dbReference type="PATRIC" id="fig|224914.52.peg.2189"/>
<dbReference type="Proteomes" id="UP000000419">
    <property type="component" value="Chromosome II"/>
</dbReference>
<dbReference type="GO" id="GO:0005886">
    <property type="term" value="C:plasma membrane"/>
    <property type="evidence" value="ECO:0007669"/>
    <property type="project" value="UniProtKB-SubCell"/>
</dbReference>
<dbReference type="InterPro" id="IPR012640">
    <property type="entry name" value="Membr_lipoprot_lipid_attach_CS"/>
</dbReference>
<dbReference type="Pfam" id="PF08139">
    <property type="entry name" value="LPAM_1"/>
    <property type="match status" value="1"/>
</dbReference>
<dbReference type="PROSITE" id="PS51257">
    <property type="entry name" value="PROKAR_LIPOPROTEIN"/>
    <property type="match status" value="1"/>
</dbReference>
<sequence>MKKVILAFVATAFLAGCTTTGPAVVPVLDGKPRVPVNKSVPAKPPLAQPNPVDTYED</sequence>